<feature type="chain" id="PRO_1000199552" description="Threonine--tRNA ligase">
    <location>
        <begin position="1"/>
        <end position="642"/>
    </location>
</feature>
<feature type="domain" description="TGS" evidence="2">
    <location>
        <begin position="1"/>
        <end position="61"/>
    </location>
</feature>
<feature type="region of interest" description="Catalytic" evidence="1">
    <location>
        <begin position="243"/>
        <end position="534"/>
    </location>
</feature>
<feature type="binding site" evidence="1">
    <location>
        <position position="334"/>
    </location>
    <ligand>
        <name>Zn(2+)</name>
        <dbReference type="ChEBI" id="CHEBI:29105"/>
    </ligand>
</feature>
<feature type="binding site" evidence="1">
    <location>
        <position position="385"/>
    </location>
    <ligand>
        <name>Zn(2+)</name>
        <dbReference type="ChEBI" id="CHEBI:29105"/>
    </ligand>
</feature>
<feature type="binding site" evidence="1">
    <location>
        <position position="511"/>
    </location>
    <ligand>
        <name>Zn(2+)</name>
        <dbReference type="ChEBI" id="CHEBI:29105"/>
    </ligand>
</feature>
<feature type="modified residue" description="N6-acetyllysine" evidence="1">
    <location>
        <position position="286"/>
    </location>
</feature>
<comment type="function">
    <text evidence="1">Catalyzes the attachment of threonine to tRNA(Thr) in a two-step reaction: L-threonine is first activated by ATP to form Thr-AMP and then transferred to the acceptor end of tRNA(Thr). Also edits incorrectly charged L-seryl-tRNA(Thr).</text>
</comment>
<comment type="catalytic activity">
    <reaction evidence="1">
        <text>tRNA(Thr) + L-threonine + ATP = L-threonyl-tRNA(Thr) + AMP + diphosphate + H(+)</text>
        <dbReference type="Rhea" id="RHEA:24624"/>
        <dbReference type="Rhea" id="RHEA-COMP:9670"/>
        <dbReference type="Rhea" id="RHEA-COMP:9704"/>
        <dbReference type="ChEBI" id="CHEBI:15378"/>
        <dbReference type="ChEBI" id="CHEBI:30616"/>
        <dbReference type="ChEBI" id="CHEBI:33019"/>
        <dbReference type="ChEBI" id="CHEBI:57926"/>
        <dbReference type="ChEBI" id="CHEBI:78442"/>
        <dbReference type="ChEBI" id="CHEBI:78534"/>
        <dbReference type="ChEBI" id="CHEBI:456215"/>
        <dbReference type="EC" id="6.1.1.3"/>
    </reaction>
</comment>
<comment type="cofactor">
    <cofactor evidence="1">
        <name>Zn(2+)</name>
        <dbReference type="ChEBI" id="CHEBI:29105"/>
    </cofactor>
    <text evidence="1">Binds 1 zinc ion per subunit.</text>
</comment>
<comment type="subunit">
    <text evidence="1">Homodimer.</text>
</comment>
<comment type="subcellular location">
    <subcellularLocation>
        <location evidence="1">Cytoplasm</location>
    </subcellularLocation>
</comment>
<comment type="similarity">
    <text evidence="1">Belongs to the class-II aminoacyl-tRNA synthetase family.</text>
</comment>
<dbReference type="EC" id="6.1.1.3" evidence="1"/>
<dbReference type="EMBL" id="CU928158">
    <property type="protein sequence ID" value="CAQ88868.1"/>
    <property type="molecule type" value="Genomic_DNA"/>
</dbReference>
<dbReference type="RefSeq" id="WP_001144186.1">
    <property type="nucleotide sequence ID" value="NC_011740.1"/>
</dbReference>
<dbReference type="SMR" id="B7LQ71"/>
<dbReference type="GeneID" id="75057612"/>
<dbReference type="KEGG" id="efe:EFER_1347"/>
<dbReference type="HOGENOM" id="CLU_008554_0_1_6"/>
<dbReference type="OrthoDB" id="9802304at2"/>
<dbReference type="Proteomes" id="UP000000745">
    <property type="component" value="Chromosome"/>
</dbReference>
<dbReference type="GO" id="GO:0005829">
    <property type="term" value="C:cytosol"/>
    <property type="evidence" value="ECO:0007669"/>
    <property type="project" value="TreeGrafter"/>
</dbReference>
<dbReference type="GO" id="GO:0005524">
    <property type="term" value="F:ATP binding"/>
    <property type="evidence" value="ECO:0007669"/>
    <property type="project" value="UniProtKB-UniRule"/>
</dbReference>
<dbReference type="GO" id="GO:0046872">
    <property type="term" value="F:metal ion binding"/>
    <property type="evidence" value="ECO:0007669"/>
    <property type="project" value="UniProtKB-KW"/>
</dbReference>
<dbReference type="GO" id="GO:0004829">
    <property type="term" value="F:threonine-tRNA ligase activity"/>
    <property type="evidence" value="ECO:0007669"/>
    <property type="project" value="UniProtKB-UniRule"/>
</dbReference>
<dbReference type="GO" id="GO:0000049">
    <property type="term" value="F:tRNA binding"/>
    <property type="evidence" value="ECO:0007669"/>
    <property type="project" value="UniProtKB-KW"/>
</dbReference>
<dbReference type="GO" id="GO:0006435">
    <property type="term" value="P:threonyl-tRNA aminoacylation"/>
    <property type="evidence" value="ECO:0007669"/>
    <property type="project" value="UniProtKB-UniRule"/>
</dbReference>
<dbReference type="CDD" id="cd01667">
    <property type="entry name" value="TGS_ThrRS"/>
    <property type="match status" value="1"/>
</dbReference>
<dbReference type="CDD" id="cd00860">
    <property type="entry name" value="ThrRS_anticodon"/>
    <property type="match status" value="1"/>
</dbReference>
<dbReference type="CDD" id="cd00771">
    <property type="entry name" value="ThrRS_core"/>
    <property type="match status" value="1"/>
</dbReference>
<dbReference type="FunFam" id="3.10.20.30:FF:000005">
    <property type="entry name" value="Threonine--tRNA ligase"/>
    <property type="match status" value="1"/>
</dbReference>
<dbReference type="FunFam" id="3.30.54.20:FF:000002">
    <property type="entry name" value="Threonine--tRNA ligase"/>
    <property type="match status" value="1"/>
</dbReference>
<dbReference type="FunFam" id="3.30.930.10:FF:000002">
    <property type="entry name" value="Threonine--tRNA ligase"/>
    <property type="match status" value="1"/>
</dbReference>
<dbReference type="FunFam" id="3.40.50.800:FF:000001">
    <property type="entry name" value="Threonine--tRNA ligase"/>
    <property type="match status" value="1"/>
</dbReference>
<dbReference type="FunFam" id="3.30.980.10:FF:000005">
    <property type="entry name" value="Threonyl-tRNA synthetase, mitochondrial"/>
    <property type="match status" value="1"/>
</dbReference>
<dbReference type="Gene3D" id="3.10.20.30">
    <property type="match status" value="1"/>
</dbReference>
<dbReference type="Gene3D" id="3.30.54.20">
    <property type="match status" value="1"/>
</dbReference>
<dbReference type="Gene3D" id="3.40.50.800">
    <property type="entry name" value="Anticodon-binding domain"/>
    <property type="match status" value="1"/>
</dbReference>
<dbReference type="Gene3D" id="3.30.930.10">
    <property type="entry name" value="Bira Bifunctional Protein, Domain 2"/>
    <property type="match status" value="1"/>
</dbReference>
<dbReference type="Gene3D" id="3.30.980.10">
    <property type="entry name" value="Threonyl-trna Synthetase, Chain A, domain 2"/>
    <property type="match status" value="1"/>
</dbReference>
<dbReference type="HAMAP" id="MF_00184">
    <property type="entry name" value="Thr_tRNA_synth"/>
    <property type="match status" value="1"/>
</dbReference>
<dbReference type="InterPro" id="IPR002314">
    <property type="entry name" value="aa-tRNA-synt_IIb"/>
</dbReference>
<dbReference type="InterPro" id="IPR006195">
    <property type="entry name" value="aa-tRNA-synth_II"/>
</dbReference>
<dbReference type="InterPro" id="IPR045864">
    <property type="entry name" value="aa-tRNA-synth_II/BPL/LPL"/>
</dbReference>
<dbReference type="InterPro" id="IPR004154">
    <property type="entry name" value="Anticodon-bd"/>
</dbReference>
<dbReference type="InterPro" id="IPR036621">
    <property type="entry name" value="Anticodon-bd_dom_sf"/>
</dbReference>
<dbReference type="InterPro" id="IPR012675">
    <property type="entry name" value="Beta-grasp_dom_sf"/>
</dbReference>
<dbReference type="InterPro" id="IPR004095">
    <property type="entry name" value="TGS"/>
</dbReference>
<dbReference type="InterPro" id="IPR012676">
    <property type="entry name" value="TGS-like"/>
</dbReference>
<dbReference type="InterPro" id="IPR002320">
    <property type="entry name" value="Thr-tRNA-ligase_IIa"/>
</dbReference>
<dbReference type="InterPro" id="IPR018163">
    <property type="entry name" value="Thr/Ala-tRNA-synth_IIc_edit"/>
</dbReference>
<dbReference type="InterPro" id="IPR047246">
    <property type="entry name" value="ThrRS_anticodon"/>
</dbReference>
<dbReference type="InterPro" id="IPR033728">
    <property type="entry name" value="ThrRS_core"/>
</dbReference>
<dbReference type="InterPro" id="IPR012947">
    <property type="entry name" value="tRNA_SAD"/>
</dbReference>
<dbReference type="NCBIfam" id="TIGR00418">
    <property type="entry name" value="thrS"/>
    <property type="match status" value="1"/>
</dbReference>
<dbReference type="PANTHER" id="PTHR11451:SF44">
    <property type="entry name" value="THREONINE--TRNA LIGASE, CHLOROPLASTIC_MITOCHONDRIAL 2"/>
    <property type="match status" value="1"/>
</dbReference>
<dbReference type="PANTHER" id="PTHR11451">
    <property type="entry name" value="THREONINE-TRNA LIGASE"/>
    <property type="match status" value="1"/>
</dbReference>
<dbReference type="Pfam" id="PF03129">
    <property type="entry name" value="HGTP_anticodon"/>
    <property type="match status" value="1"/>
</dbReference>
<dbReference type="Pfam" id="PF02824">
    <property type="entry name" value="TGS"/>
    <property type="match status" value="1"/>
</dbReference>
<dbReference type="Pfam" id="PF00587">
    <property type="entry name" value="tRNA-synt_2b"/>
    <property type="match status" value="1"/>
</dbReference>
<dbReference type="Pfam" id="PF07973">
    <property type="entry name" value="tRNA_SAD"/>
    <property type="match status" value="1"/>
</dbReference>
<dbReference type="PRINTS" id="PR01047">
    <property type="entry name" value="TRNASYNTHTHR"/>
</dbReference>
<dbReference type="SMART" id="SM00863">
    <property type="entry name" value="tRNA_SAD"/>
    <property type="match status" value="1"/>
</dbReference>
<dbReference type="SUPFAM" id="SSF52954">
    <property type="entry name" value="Class II aaRS ABD-related"/>
    <property type="match status" value="1"/>
</dbReference>
<dbReference type="SUPFAM" id="SSF55681">
    <property type="entry name" value="Class II aaRS and biotin synthetases"/>
    <property type="match status" value="1"/>
</dbReference>
<dbReference type="SUPFAM" id="SSF81271">
    <property type="entry name" value="TGS-like"/>
    <property type="match status" value="1"/>
</dbReference>
<dbReference type="SUPFAM" id="SSF55186">
    <property type="entry name" value="ThrRS/AlaRS common domain"/>
    <property type="match status" value="1"/>
</dbReference>
<dbReference type="PROSITE" id="PS50862">
    <property type="entry name" value="AA_TRNA_LIGASE_II"/>
    <property type="match status" value="1"/>
</dbReference>
<dbReference type="PROSITE" id="PS51880">
    <property type="entry name" value="TGS"/>
    <property type="match status" value="1"/>
</dbReference>
<sequence>MPVITLPDGSQRHYDHAVSPMDVALDIGPGLAKACIAGRVNGELVDACDLIENDAQLAIITAKDEEGLEIIRHSCAHLLGHAIKQLWPHTKMAIGPVIDNGFYYDVDLDRTLTQEDVEALEKRMHELAEKNYDVIKKKVSWHEARETFVKRGESYKVSILDENIAHDDQPGLYFHEEYVDMCRGPHVPNMRFCHHFKLMKTAGAYWRGDSNNKMLQRIYGTAWADKKALNAYLQRLEEAAKRDHRKIGKQLDLYHMQEEAPGMVFWHNDGWTIFRELEVFVRTKLKEYQYQEVKGPFMMDRVLWEKTGHWENYKDAMFTTSSENREYCIKPMNCPGHVQIFNQGLKSYRDLPLRMAEFGSCHRNEPSGSLHGLMRVRGFTQDDAHIFCTEEQIRDEVNGCIRLVYDMYSTFGFEKIVVKLSTRPEKRIGSDEMWDRAEADLAVALEENNIPFEYQLGEGAFYGPKIEFTLYDCLDRAWQCGTVQLDFSLPSRLSASYVGEDNERKVPVMIHRAILGSMERFIGILTEEFAGFFPTWLAPVQVVIMNITDSQSEYVNELTQKLSNAGIRVKADLRNEKIGFKIREHTLRRVPYMLVCGDKEVESGKVAVRTRRGKDLGSMDVNEVIEKLQQEIRSRSLKQLEE</sequence>
<gene>
    <name evidence="1" type="primary">thrS</name>
    <name type="ordered locus">EFER_1347</name>
</gene>
<accession>B7LQ71</accession>
<organism>
    <name type="scientific">Escherichia fergusonii (strain ATCC 35469 / DSM 13698 / CCUG 18766 / IAM 14443 / JCM 21226 / LMG 7866 / NBRC 102419 / NCTC 12128 / CDC 0568-73)</name>
    <dbReference type="NCBI Taxonomy" id="585054"/>
    <lineage>
        <taxon>Bacteria</taxon>
        <taxon>Pseudomonadati</taxon>
        <taxon>Pseudomonadota</taxon>
        <taxon>Gammaproteobacteria</taxon>
        <taxon>Enterobacterales</taxon>
        <taxon>Enterobacteriaceae</taxon>
        <taxon>Escherichia</taxon>
    </lineage>
</organism>
<name>SYT_ESCF3</name>
<proteinExistence type="inferred from homology"/>
<reference key="1">
    <citation type="journal article" date="2009" name="PLoS Genet.">
        <title>Organised genome dynamics in the Escherichia coli species results in highly diverse adaptive paths.</title>
        <authorList>
            <person name="Touchon M."/>
            <person name="Hoede C."/>
            <person name="Tenaillon O."/>
            <person name="Barbe V."/>
            <person name="Baeriswyl S."/>
            <person name="Bidet P."/>
            <person name="Bingen E."/>
            <person name="Bonacorsi S."/>
            <person name="Bouchier C."/>
            <person name="Bouvet O."/>
            <person name="Calteau A."/>
            <person name="Chiapello H."/>
            <person name="Clermont O."/>
            <person name="Cruveiller S."/>
            <person name="Danchin A."/>
            <person name="Diard M."/>
            <person name="Dossat C."/>
            <person name="Karoui M.E."/>
            <person name="Frapy E."/>
            <person name="Garry L."/>
            <person name="Ghigo J.M."/>
            <person name="Gilles A.M."/>
            <person name="Johnson J."/>
            <person name="Le Bouguenec C."/>
            <person name="Lescat M."/>
            <person name="Mangenot S."/>
            <person name="Martinez-Jehanne V."/>
            <person name="Matic I."/>
            <person name="Nassif X."/>
            <person name="Oztas S."/>
            <person name="Petit M.A."/>
            <person name="Pichon C."/>
            <person name="Rouy Z."/>
            <person name="Ruf C.S."/>
            <person name="Schneider D."/>
            <person name="Tourret J."/>
            <person name="Vacherie B."/>
            <person name="Vallenet D."/>
            <person name="Medigue C."/>
            <person name="Rocha E.P.C."/>
            <person name="Denamur E."/>
        </authorList>
    </citation>
    <scope>NUCLEOTIDE SEQUENCE [LARGE SCALE GENOMIC DNA]</scope>
    <source>
        <strain>ATCC 35469 / DSM 13698 / BCRC 15582 / CCUG 18766 / IAM 14443 / JCM 21226 / LMG 7866 / NBRC 102419 / NCTC 12128 / CDC 0568-73</strain>
    </source>
</reference>
<evidence type="ECO:0000255" key="1">
    <source>
        <dbReference type="HAMAP-Rule" id="MF_00184"/>
    </source>
</evidence>
<evidence type="ECO:0000255" key="2">
    <source>
        <dbReference type="PROSITE-ProRule" id="PRU01228"/>
    </source>
</evidence>
<protein>
    <recommendedName>
        <fullName evidence="1">Threonine--tRNA ligase</fullName>
        <ecNumber evidence="1">6.1.1.3</ecNumber>
    </recommendedName>
    <alternativeName>
        <fullName evidence="1">Threonyl-tRNA synthetase</fullName>
        <shortName evidence="1">ThrRS</shortName>
    </alternativeName>
</protein>
<keyword id="KW-0007">Acetylation</keyword>
<keyword id="KW-0030">Aminoacyl-tRNA synthetase</keyword>
<keyword id="KW-0067">ATP-binding</keyword>
<keyword id="KW-0963">Cytoplasm</keyword>
<keyword id="KW-0436">Ligase</keyword>
<keyword id="KW-0479">Metal-binding</keyword>
<keyword id="KW-0547">Nucleotide-binding</keyword>
<keyword id="KW-0648">Protein biosynthesis</keyword>
<keyword id="KW-0694">RNA-binding</keyword>
<keyword id="KW-0820">tRNA-binding</keyword>
<keyword id="KW-0862">Zinc</keyword>